<proteinExistence type="inferred from homology"/>
<gene>
    <name evidence="1" type="primary">murC</name>
    <name type="ordered locus">PBPRA3214</name>
</gene>
<protein>
    <recommendedName>
        <fullName evidence="1">UDP-N-acetylmuramate--L-alanine ligase</fullName>
        <ecNumber evidence="1">6.3.2.8</ecNumber>
    </recommendedName>
    <alternativeName>
        <fullName evidence="1">UDP-N-acetylmuramoyl-L-alanine synthetase</fullName>
    </alternativeName>
</protein>
<keyword id="KW-0067">ATP-binding</keyword>
<keyword id="KW-0131">Cell cycle</keyword>
<keyword id="KW-0132">Cell division</keyword>
<keyword id="KW-0133">Cell shape</keyword>
<keyword id="KW-0961">Cell wall biogenesis/degradation</keyword>
<keyword id="KW-0963">Cytoplasm</keyword>
<keyword id="KW-0436">Ligase</keyword>
<keyword id="KW-0547">Nucleotide-binding</keyword>
<keyword id="KW-0573">Peptidoglycan synthesis</keyword>
<keyword id="KW-1185">Reference proteome</keyword>
<comment type="function">
    <text evidence="1">Cell wall formation.</text>
</comment>
<comment type="catalytic activity">
    <reaction evidence="1">
        <text>UDP-N-acetyl-alpha-D-muramate + L-alanine + ATP = UDP-N-acetyl-alpha-D-muramoyl-L-alanine + ADP + phosphate + H(+)</text>
        <dbReference type="Rhea" id="RHEA:23372"/>
        <dbReference type="ChEBI" id="CHEBI:15378"/>
        <dbReference type="ChEBI" id="CHEBI:30616"/>
        <dbReference type="ChEBI" id="CHEBI:43474"/>
        <dbReference type="ChEBI" id="CHEBI:57972"/>
        <dbReference type="ChEBI" id="CHEBI:70757"/>
        <dbReference type="ChEBI" id="CHEBI:83898"/>
        <dbReference type="ChEBI" id="CHEBI:456216"/>
        <dbReference type="EC" id="6.3.2.8"/>
    </reaction>
</comment>
<comment type="pathway">
    <text evidence="1">Cell wall biogenesis; peptidoglycan biosynthesis.</text>
</comment>
<comment type="subcellular location">
    <subcellularLocation>
        <location evidence="1">Cytoplasm</location>
    </subcellularLocation>
</comment>
<comment type="similarity">
    <text evidence="1">Belongs to the MurCDEF family.</text>
</comment>
<dbReference type="EC" id="6.3.2.8" evidence="1"/>
<dbReference type="EMBL" id="CR378673">
    <property type="protein sequence ID" value="CAG21520.1"/>
    <property type="molecule type" value="Genomic_DNA"/>
</dbReference>
<dbReference type="SMR" id="Q6LMF7"/>
<dbReference type="STRING" id="298386.PBPRA3214"/>
<dbReference type="KEGG" id="ppr:PBPRA3214"/>
<dbReference type="eggNOG" id="COG0773">
    <property type="taxonomic scope" value="Bacteria"/>
</dbReference>
<dbReference type="HOGENOM" id="CLU_028104_2_2_6"/>
<dbReference type="UniPathway" id="UPA00219"/>
<dbReference type="Proteomes" id="UP000000593">
    <property type="component" value="Chromosome 1"/>
</dbReference>
<dbReference type="GO" id="GO:0005737">
    <property type="term" value="C:cytoplasm"/>
    <property type="evidence" value="ECO:0007669"/>
    <property type="project" value="UniProtKB-SubCell"/>
</dbReference>
<dbReference type="GO" id="GO:0005524">
    <property type="term" value="F:ATP binding"/>
    <property type="evidence" value="ECO:0007669"/>
    <property type="project" value="UniProtKB-UniRule"/>
</dbReference>
<dbReference type="GO" id="GO:0008763">
    <property type="term" value="F:UDP-N-acetylmuramate-L-alanine ligase activity"/>
    <property type="evidence" value="ECO:0007669"/>
    <property type="project" value="UniProtKB-UniRule"/>
</dbReference>
<dbReference type="GO" id="GO:0051301">
    <property type="term" value="P:cell division"/>
    <property type="evidence" value="ECO:0007669"/>
    <property type="project" value="UniProtKB-KW"/>
</dbReference>
<dbReference type="GO" id="GO:0071555">
    <property type="term" value="P:cell wall organization"/>
    <property type="evidence" value="ECO:0007669"/>
    <property type="project" value="UniProtKB-KW"/>
</dbReference>
<dbReference type="GO" id="GO:0009252">
    <property type="term" value="P:peptidoglycan biosynthetic process"/>
    <property type="evidence" value="ECO:0007669"/>
    <property type="project" value="UniProtKB-UniRule"/>
</dbReference>
<dbReference type="GO" id="GO:0008360">
    <property type="term" value="P:regulation of cell shape"/>
    <property type="evidence" value="ECO:0007669"/>
    <property type="project" value="UniProtKB-KW"/>
</dbReference>
<dbReference type="FunFam" id="3.40.1190.10:FF:000001">
    <property type="entry name" value="UDP-N-acetylmuramate--L-alanine ligase"/>
    <property type="match status" value="1"/>
</dbReference>
<dbReference type="FunFam" id="3.40.50.720:FF:000046">
    <property type="entry name" value="UDP-N-acetylmuramate--L-alanine ligase"/>
    <property type="match status" value="1"/>
</dbReference>
<dbReference type="Gene3D" id="3.90.190.20">
    <property type="entry name" value="Mur ligase, C-terminal domain"/>
    <property type="match status" value="1"/>
</dbReference>
<dbReference type="Gene3D" id="3.40.1190.10">
    <property type="entry name" value="Mur-like, catalytic domain"/>
    <property type="match status" value="1"/>
</dbReference>
<dbReference type="Gene3D" id="3.40.50.720">
    <property type="entry name" value="NAD(P)-binding Rossmann-like Domain"/>
    <property type="match status" value="1"/>
</dbReference>
<dbReference type="HAMAP" id="MF_00046">
    <property type="entry name" value="MurC"/>
    <property type="match status" value="1"/>
</dbReference>
<dbReference type="InterPro" id="IPR036565">
    <property type="entry name" value="Mur-like_cat_sf"/>
</dbReference>
<dbReference type="InterPro" id="IPR004101">
    <property type="entry name" value="Mur_ligase_C"/>
</dbReference>
<dbReference type="InterPro" id="IPR036615">
    <property type="entry name" value="Mur_ligase_C_dom_sf"/>
</dbReference>
<dbReference type="InterPro" id="IPR013221">
    <property type="entry name" value="Mur_ligase_cen"/>
</dbReference>
<dbReference type="InterPro" id="IPR000713">
    <property type="entry name" value="Mur_ligase_N"/>
</dbReference>
<dbReference type="InterPro" id="IPR050061">
    <property type="entry name" value="MurCDEF_pg_biosynth"/>
</dbReference>
<dbReference type="InterPro" id="IPR005758">
    <property type="entry name" value="UDP-N-AcMur_Ala_ligase_MurC"/>
</dbReference>
<dbReference type="NCBIfam" id="TIGR01082">
    <property type="entry name" value="murC"/>
    <property type="match status" value="1"/>
</dbReference>
<dbReference type="PANTHER" id="PTHR43445:SF3">
    <property type="entry name" value="UDP-N-ACETYLMURAMATE--L-ALANINE LIGASE"/>
    <property type="match status" value="1"/>
</dbReference>
<dbReference type="PANTHER" id="PTHR43445">
    <property type="entry name" value="UDP-N-ACETYLMURAMATE--L-ALANINE LIGASE-RELATED"/>
    <property type="match status" value="1"/>
</dbReference>
<dbReference type="Pfam" id="PF01225">
    <property type="entry name" value="Mur_ligase"/>
    <property type="match status" value="1"/>
</dbReference>
<dbReference type="Pfam" id="PF02875">
    <property type="entry name" value="Mur_ligase_C"/>
    <property type="match status" value="1"/>
</dbReference>
<dbReference type="Pfam" id="PF08245">
    <property type="entry name" value="Mur_ligase_M"/>
    <property type="match status" value="1"/>
</dbReference>
<dbReference type="SUPFAM" id="SSF51984">
    <property type="entry name" value="MurCD N-terminal domain"/>
    <property type="match status" value="1"/>
</dbReference>
<dbReference type="SUPFAM" id="SSF53623">
    <property type="entry name" value="MurD-like peptide ligases, catalytic domain"/>
    <property type="match status" value="1"/>
</dbReference>
<dbReference type="SUPFAM" id="SSF53244">
    <property type="entry name" value="MurD-like peptide ligases, peptide-binding domain"/>
    <property type="match status" value="1"/>
</dbReference>
<name>MURC_PHOPR</name>
<sequence>MMSKLDNQQLAKIRTMVPEMRRVERIHFVGIGGAGMSGIAEVLLNEGYRISGSDLAPNAVTDSLTQKGAEIFFGHAAENVNGASVVVVSTAIAQDNPELVAARELRIPVVRRAEMLAELMRYRHGIAIAGTHGKTTTTALMTQIYFEAGLDPTFVNGGLVKSAGTNARLGCSRYLIAEADESDASFLHLQPMVSVVTNIEADHMDTYGGDFEVLKQTFIDFLHNLPFYGLAVMCVDDPVVRELLPRIGRQIITYGFSDDADVRIVEYGQHAHQGHFTILRAGKPDLNVKLNIPGKHNALNATAAVAVATEEGVDDDAIIRALLEFEGTGRRFDHLGEFETGNGSVMLVDDYGHHPSEVDVTIQAARAGWEKKRLVMIFQPHRYSRTRDLYEDFAHVLEQVDVLLMLDVYSAGEVAIPGADGRSLCRTIRGRGKIDPIFVPTHEDLPSVLANILQNDDLLLTQGAGDVGKIARQLADLQLDIAAMRAE</sequence>
<reference key="1">
    <citation type="journal article" date="2005" name="Science">
        <title>Life at depth: Photobacterium profundum genome sequence and expression analysis.</title>
        <authorList>
            <person name="Vezzi A."/>
            <person name="Campanaro S."/>
            <person name="D'Angelo M."/>
            <person name="Simonato F."/>
            <person name="Vitulo N."/>
            <person name="Lauro F.M."/>
            <person name="Cestaro A."/>
            <person name="Malacrida G."/>
            <person name="Simionati B."/>
            <person name="Cannata N."/>
            <person name="Romualdi C."/>
            <person name="Bartlett D.H."/>
            <person name="Valle G."/>
        </authorList>
    </citation>
    <scope>NUCLEOTIDE SEQUENCE [LARGE SCALE GENOMIC DNA]</scope>
    <source>
        <strain>ATCC BAA-1253 / SS9</strain>
    </source>
</reference>
<evidence type="ECO:0000255" key="1">
    <source>
        <dbReference type="HAMAP-Rule" id="MF_00046"/>
    </source>
</evidence>
<organism>
    <name type="scientific">Photobacterium profundum (strain SS9)</name>
    <dbReference type="NCBI Taxonomy" id="298386"/>
    <lineage>
        <taxon>Bacteria</taxon>
        <taxon>Pseudomonadati</taxon>
        <taxon>Pseudomonadota</taxon>
        <taxon>Gammaproteobacteria</taxon>
        <taxon>Vibrionales</taxon>
        <taxon>Vibrionaceae</taxon>
        <taxon>Photobacterium</taxon>
    </lineage>
</organism>
<feature type="chain" id="PRO_0000182129" description="UDP-N-acetylmuramate--L-alanine ligase">
    <location>
        <begin position="1"/>
        <end position="487"/>
    </location>
</feature>
<feature type="binding site" evidence="1">
    <location>
        <begin position="130"/>
        <end position="136"/>
    </location>
    <ligand>
        <name>ATP</name>
        <dbReference type="ChEBI" id="CHEBI:30616"/>
    </ligand>
</feature>
<accession>Q6LMF7</accession>